<protein>
    <recommendedName>
        <fullName evidence="1">Probable transaldolase</fullName>
        <ecNumber evidence="1">2.2.1.2</ecNumber>
    </recommendedName>
</protein>
<accession>Q0AUA5</accession>
<name>TAL_SYNWW</name>
<proteinExistence type="inferred from homology"/>
<keyword id="KW-0963">Cytoplasm</keyword>
<keyword id="KW-0570">Pentose shunt</keyword>
<keyword id="KW-1185">Reference proteome</keyword>
<keyword id="KW-0704">Schiff base</keyword>
<keyword id="KW-0808">Transferase</keyword>
<sequence length="213" mass="23153">MRIFIDSANIEEIKEINGMGFLAGVTTNPSLVAKEKKDYKGLIREISMLVDGPISAEVIALDYQAMVQEGEELASIHPNVVIKIPLCEEGLKAIHALKQKGIATNATLVFSANQALLAARAGASYVSPFIGRVDDTGNDGLTLLDDIVQIFDQYMVETEVIAASIRHPMHVVASAKIGSNIATIPYQVIKQMVKHPLSDAGIEKFMSDWKKAF</sequence>
<evidence type="ECO:0000255" key="1">
    <source>
        <dbReference type="HAMAP-Rule" id="MF_00494"/>
    </source>
</evidence>
<dbReference type="EC" id="2.2.1.2" evidence="1"/>
<dbReference type="EMBL" id="CP000448">
    <property type="protein sequence ID" value="ABI69699.1"/>
    <property type="molecule type" value="Genomic_DNA"/>
</dbReference>
<dbReference type="RefSeq" id="WP_011641783.1">
    <property type="nucleotide sequence ID" value="NC_008346.1"/>
</dbReference>
<dbReference type="SMR" id="Q0AUA5"/>
<dbReference type="STRING" id="335541.Swol_2410"/>
<dbReference type="KEGG" id="swo:Swol_2410"/>
<dbReference type="eggNOG" id="COG0176">
    <property type="taxonomic scope" value="Bacteria"/>
</dbReference>
<dbReference type="HOGENOM" id="CLU_079764_0_0_9"/>
<dbReference type="OrthoDB" id="9807051at2"/>
<dbReference type="UniPathway" id="UPA00115">
    <property type="reaction ID" value="UER00414"/>
</dbReference>
<dbReference type="Proteomes" id="UP000001968">
    <property type="component" value="Chromosome"/>
</dbReference>
<dbReference type="GO" id="GO:0005737">
    <property type="term" value="C:cytoplasm"/>
    <property type="evidence" value="ECO:0007669"/>
    <property type="project" value="UniProtKB-SubCell"/>
</dbReference>
<dbReference type="GO" id="GO:0016832">
    <property type="term" value="F:aldehyde-lyase activity"/>
    <property type="evidence" value="ECO:0007669"/>
    <property type="project" value="InterPro"/>
</dbReference>
<dbReference type="GO" id="GO:0004801">
    <property type="term" value="F:transaldolase activity"/>
    <property type="evidence" value="ECO:0007669"/>
    <property type="project" value="UniProtKB-UniRule"/>
</dbReference>
<dbReference type="GO" id="GO:0005975">
    <property type="term" value="P:carbohydrate metabolic process"/>
    <property type="evidence" value="ECO:0007669"/>
    <property type="project" value="InterPro"/>
</dbReference>
<dbReference type="GO" id="GO:0006098">
    <property type="term" value="P:pentose-phosphate shunt"/>
    <property type="evidence" value="ECO:0007669"/>
    <property type="project" value="UniProtKB-UniRule"/>
</dbReference>
<dbReference type="CDD" id="cd00956">
    <property type="entry name" value="Transaldolase_FSA"/>
    <property type="match status" value="1"/>
</dbReference>
<dbReference type="FunFam" id="3.20.20.70:FF:000018">
    <property type="entry name" value="Probable transaldolase"/>
    <property type="match status" value="1"/>
</dbReference>
<dbReference type="Gene3D" id="3.20.20.70">
    <property type="entry name" value="Aldolase class I"/>
    <property type="match status" value="1"/>
</dbReference>
<dbReference type="HAMAP" id="MF_00494">
    <property type="entry name" value="Transaldolase_3b"/>
    <property type="match status" value="1"/>
</dbReference>
<dbReference type="InterPro" id="IPR013785">
    <property type="entry name" value="Aldolase_TIM"/>
</dbReference>
<dbReference type="InterPro" id="IPR001585">
    <property type="entry name" value="TAL/FSA"/>
</dbReference>
<dbReference type="InterPro" id="IPR022999">
    <property type="entry name" value="Transaldolase_3B"/>
</dbReference>
<dbReference type="InterPro" id="IPR004731">
    <property type="entry name" value="Transaldolase_3B/F6P_aldolase"/>
</dbReference>
<dbReference type="InterPro" id="IPR018225">
    <property type="entry name" value="Transaldolase_AS"/>
</dbReference>
<dbReference type="InterPro" id="IPR033919">
    <property type="entry name" value="TSA/FSA_arc/bac"/>
</dbReference>
<dbReference type="NCBIfam" id="TIGR00875">
    <property type="entry name" value="fsa_talC_mipB"/>
    <property type="match status" value="1"/>
</dbReference>
<dbReference type="PANTHER" id="PTHR10683">
    <property type="entry name" value="TRANSALDOLASE"/>
    <property type="match status" value="1"/>
</dbReference>
<dbReference type="PANTHER" id="PTHR10683:SF36">
    <property type="entry name" value="TRANSALDOLASE"/>
    <property type="match status" value="1"/>
</dbReference>
<dbReference type="Pfam" id="PF00923">
    <property type="entry name" value="TAL_FSA"/>
    <property type="match status" value="1"/>
</dbReference>
<dbReference type="SUPFAM" id="SSF51569">
    <property type="entry name" value="Aldolase"/>
    <property type="match status" value="1"/>
</dbReference>
<dbReference type="PROSITE" id="PS01054">
    <property type="entry name" value="TRANSALDOLASE_1"/>
    <property type="match status" value="1"/>
</dbReference>
<dbReference type="PROSITE" id="PS00958">
    <property type="entry name" value="TRANSALDOLASE_2"/>
    <property type="match status" value="1"/>
</dbReference>
<feature type="chain" id="PRO_1000126364" description="Probable transaldolase">
    <location>
        <begin position="1"/>
        <end position="213"/>
    </location>
</feature>
<feature type="active site" description="Schiff-base intermediate with substrate" evidence="1">
    <location>
        <position position="83"/>
    </location>
</feature>
<comment type="function">
    <text evidence="1">Transaldolase is important for the balance of metabolites in the pentose-phosphate pathway.</text>
</comment>
<comment type="catalytic activity">
    <reaction evidence="1">
        <text>D-sedoheptulose 7-phosphate + D-glyceraldehyde 3-phosphate = D-erythrose 4-phosphate + beta-D-fructose 6-phosphate</text>
        <dbReference type="Rhea" id="RHEA:17053"/>
        <dbReference type="ChEBI" id="CHEBI:16897"/>
        <dbReference type="ChEBI" id="CHEBI:57483"/>
        <dbReference type="ChEBI" id="CHEBI:57634"/>
        <dbReference type="ChEBI" id="CHEBI:59776"/>
        <dbReference type="EC" id="2.2.1.2"/>
    </reaction>
</comment>
<comment type="pathway">
    <text evidence="1">Carbohydrate degradation; pentose phosphate pathway; D-glyceraldehyde 3-phosphate and beta-D-fructose 6-phosphate from D-ribose 5-phosphate and D-xylulose 5-phosphate (non-oxidative stage): step 2/3.</text>
</comment>
<comment type="subcellular location">
    <subcellularLocation>
        <location evidence="1">Cytoplasm</location>
    </subcellularLocation>
</comment>
<comment type="similarity">
    <text evidence="1">Belongs to the transaldolase family. Type 3B subfamily.</text>
</comment>
<gene>
    <name evidence="1" type="primary">tal</name>
    <name type="ordered locus">Swol_2410</name>
</gene>
<reference key="1">
    <citation type="journal article" date="2010" name="Environ. Microbiol.">
        <title>The genome of Syntrophomonas wolfei: new insights into syntrophic metabolism and biohydrogen production.</title>
        <authorList>
            <person name="Sieber J.R."/>
            <person name="Sims D.R."/>
            <person name="Han C."/>
            <person name="Kim E."/>
            <person name="Lykidis A."/>
            <person name="Lapidus A.L."/>
            <person name="McDonnald E."/>
            <person name="Rohlin L."/>
            <person name="Culley D.E."/>
            <person name="Gunsalus R."/>
            <person name="McInerney M.J."/>
        </authorList>
    </citation>
    <scope>NUCLEOTIDE SEQUENCE [LARGE SCALE GENOMIC DNA]</scope>
    <source>
        <strain>DSM 2245B / Goettingen</strain>
    </source>
</reference>
<organism>
    <name type="scientific">Syntrophomonas wolfei subsp. wolfei (strain DSM 2245B / Goettingen)</name>
    <dbReference type="NCBI Taxonomy" id="335541"/>
    <lineage>
        <taxon>Bacteria</taxon>
        <taxon>Bacillati</taxon>
        <taxon>Bacillota</taxon>
        <taxon>Clostridia</taxon>
        <taxon>Eubacteriales</taxon>
        <taxon>Syntrophomonadaceae</taxon>
        <taxon>Syntrophomonas</taxon>
    </lineage>
</organism>